<keyword id="KW-0963">Cytoplasm</keyword>
<keyword id="KW-0378">Hydrolase</keyword>
<keyword id="KW-0479">Metal-binding</keyword>
<keyword id="KW-0547">Nucleotide-binding</keyword>
<keyword id="KW-1185">Reference proteome</keyword>
<gene>
    <name evidence="1" type="primary">surE</name>
    <name type="ordered locus">BAB1_0905</name>
</gene>
<dbReference type="EC" id="3.1.3.5" evidence="1"/>
<dbReference type="EMBL" id="AM040264">
    <property type="protein sequence ID" value="CAJ10861.1"/>
    <property type="molecule type" value="Genomic_DNA"/>
</dbReference>
<dbReference type="RefSeq" id="WP_002966786.1">
    <property type="nucleotide sequence ID" value="NZ_KN046823.1"/>
</dbReference>
<dbReference type="SMR" id="Q2YNM5"/>
<dbReference type="STRING" id="359391.BAB1_0905"/>
<dbReference type="GeneID" id="93016736"/>
<dbReference type="KEGG" id="bmf:BAB1_0905"/>
<dbReference type="PATRIC" id="fig|359391.11.peg.3213"/>
<dbReference type="HOGENOM" id="CLU_045192_1_2_5"/>
<dbReference type="PhylomeDB" id="Q2YNM5"/>
<dbReference type="Proteomes" id="UP000002719">
    <property type="component" value="Chromosome I"/>
</dbReference>
<dbReference type="GO" id="GO:0005737">
    <property type="term" value="C:cytoplasm"/>
    <property type="evidence" value="ECO:0007669"/>
    <property type="project" value="UniProtKB-SubCell"/>
</dbReference>
<dbReference type="GO" id="GO:0008254">
    <property type="term" value="F:3'-nucleotidase activity"/>
    <property type="evidence" value="ECO:0007669"/>
    <property type="project" value="TreeGrafter"/>
</dbReference>
<dbReference type="GO" id="GO:0008253">
    <property type="term" value="F:5'-nucleotidase activity"/>
    <property type="evidence" value="ECO:0007669"/>
    <property type="project" value="UniProtKB-UniRule"/>
</dbReference>
<dbReference type="GO" id="GO:0004309">
    <property type="term" value="F:exopolyphosphatase activity"/>
    <property type="evidence" value="ECO:0007669"/>
    <property type="project" value="TreeGrafter"/>
</dbReference>
<dbReference type="GO" id="GO:0046872">
    <property type="term" value="F:metal ion binding"/>
    <property type="evidence" value="ECO:0007669"/>
    <property type="project" value="UniProtKB-UniRule"/>
</dbReference>
<dbReference type="GO" id="GO:0000166">
    <property type="term" value="F:nucleotide binding"/>
    <property type="evidence" value="ECO:0007669"/>
    <property type="project" value="UniProtKB-KW"/>
</dbReference>
<dbReference type="FunFam" id="3.40.1210.10:FF:000001">
    <property type="entry name" value="5'/3'-nucleotidase SurE"/>
    <property type="match status" value="1"/>
</dbReference>
<dbReference type="Gene3D" id="3.40.1210.10">
    <property type="entry name" value="Survival protein SurE-like phosphatase/nucleotidase"/>
    <property type="match status" value="1"/>
</dbReference>
<dbReference type="HAMAP" id="MF_00060">
    <property type="entry name" value="SurE"/>
    <property type="match status" value="1"/>
</dbReference>
<dbReference type="InterPro" id="IPR030048">
    <property type="entry name" value="SurE"/>
</dbReference>
<dbReference type="InterPro" id="IPR002828">
    <property type="entry name" value="SurE-like_Pase/nucleotidase"/>
</dbReference>
<dbReference type="InterPro" id="IPR036523">
    <property type="entry name" value="SurE-like_sf"/>
</dbReference>
<dbReference type="NCBIfam" id="NF001490">
    <property type="entry name" value="PRK00346.1-4"/>
    <property type="match status" value="1"/>
</dbReference>
<dbReference type="NCBIfam" id="TIGR00087">
    <property type="entry name" value="surE"/>
    <property type="match status" value="1"/>
</dbReference>
<dbReference type="PANTHER" id="PTHR30457">
    <property type="entry name" value="5'-NUCLEOTIDASE SURE"/>
    <property type="match status" value="1"/>
</dbReference>
<dbReference type="PANTHER" id="PTHR30457:SF12">
    <property type="entry name" value="5'_3'-NUCLEOTIDASE SURE"/>
    <property type="match status" value="1"/>
</dbReference>
<dbReference type="Pfam" id="PF01975">
    <property type="entry name" value="SurE"/>
    <property type="match status" value="1"/>
</dbReference>
<dbReference type="SUPFAM" id="SSF64167">
    <property type="entry name" value="SurE-like"/>
    <property type="match status" value="1"/>
</dbReference>
<reference key="1">
    <citation type="journal article" date="2005" name="Infect. Immun.">
        <title>Whole-genome analyses of speciation events in pathogenic Brucellae.</title>
        <authorList>
            <person name="Chain P.S."/>
            <person name="Comerci D.J."/>
            <person name="Tolmasky M.E."/>
            <person name="Larimer F.W."/>
            <person name="Malfatti S.A."/>
            <person name="Vergez L.M."/>
            <person name="Aguero F."/>
            <person name="Land M.L."/>
            <person name="Ugalde R.A."/>
            <person name="Garcia E."/>
        </authorList>
    </citation>
    <scope>NUCLEOTIDE SEQUENCE [LARGE SCALE GENOMIC DNA]</scope>
    <source>
        <strain>2308</strain>
    </source>
</reference>
<accession>Q2YNM5</accession>
<name>SURE_BRUA2</name>
<evidence type="ECO:0000255" key="1">
    <source>
        <dbReference type="HAMAP-Rule" id="MF_00060"/>
    </source>
</evidence>
<organism>
    <name type="scientific">Brucella abortus (strain 2308)</name>
    <dbReference type="NCBI Taxonomy" id="359391"/>
    <lineage>
        <taxon>Bacteria</taxon>
        <taxon>Pseudomonadati</taxon>
        <taxon>Pseudomonadota</taxon>
        <taxon>Alphaproteobacteria</taxon>
        <taxon>Hyphomicrobiales</taxon>
        <taxon>Brucellaceae</taxon>
        <taxon>Brucella/Ochrobactrum group</taxon>
        <taxon>Brucella</taxon>
    </lineage>
</organism>
<sequence>MRILLTNDDGIHAEGLAVLERIARKLSDDVWVVAPETDQSGLAHSLTLLEPLRLRQIDARHFALRGTPTDCVIMGVRHVLPGAPDLVLSGVNSGANMADDVTYSGTVAGAMEGTLLGVRAIALSQEYEYAGDRRIVPWETAEAHAPELIGRLMEAGWPEGVLLNLNFPNCAPEEVKGVRVTAQGKLSHDARLDERRDGRGFPYFWLHFGRGKAPVADDSDIAAIRSGCISMTPLHLDLTAHKVRAELGAALGVEA</sequence>
<feature type="chain" id="PRO_0000235596" description="5'-nucleotidase SurE">
    <location>
        <begin position="1"/>
        <end position="255"/>
    </location>
</feature>
<feature type="binding site" evidence="1">
    <location>
        <position position="8"/>
    </location>
    <ligand>
        <name>a divalent metal cation</name>
        <dbReference type="ChEBI" id="CHEBI:60240"/>
    </ligand>
</feature>
<feature type="binding site" evidence="1">
    <location>
        <position position="9"/>
    </location>
    <ligand>
        <name>a divalent metal cation</name>
        <dbReference type="ChEBI" id="CHEBI:60240"/>
    </ligand>
</feature>
<feature type="binding site" evidence="1">
    <location>
        <position position="40"/>
    </location>
    <ligand>
        <name>a divalent metal cation</name>
        <dbReference type="ChEBI" id="CHEBI:60240"/>
    </ligand>
</feature>
<feature type="binding site" evidence="1">
    <location>
        <position position="92"/>
    </location>
    <ligand>
        <name>a divalent metal cation</name>
        <dbReference type="ChEBI" id="CHEBI:60240"/>
    </ligand>
</feature>
<proteinExistence type="inferred from homology"/>
<comment type="function">
    <text evidence="1">Nucleotidase that shows phosphatase activity on nucleoside 5'-monophosphates.</text>
</comment>
<comment type="catalytic activity">
    <reaction evidence="1">
        <text>a ribonucleoside 5'-phosphate + H2O = a ribonucleoside + phosphate</text>
        <dbReference type="Rhea" id="RHEA:12484"/>
        <dbReference type="ChEBI" id="CHEBI:15377"/>
        <dbReference type="ChEBI" id="CHEBI:18254"/>
        <dbReference type="ChEBI" id="CHEBI:43474"/>
        <dbReference type="ChEBI" id="CHEBI:58043"/>
        <dbReference type="EC" id="3.1.3.5"/>
    </reaction>
</comment>
<comment type="cofactor">
    <cofactor evidence="1">
        <name>a divalent metal cation</name>
        <dbReference type="ChEBI" id="CHEBI:60240"/>
    </cofactor>
    <text evidence="1">Binds 1 divalent metal cation per subunit.</text>
</comment>
<comment type="subcellular location">
    <subcellularLocation>
        <location evidence="1">Cytoplasm</location>
    </subcellularLocation>
</comment>
<comment type="similarity">
    <text evidence="1">Belongs to the SurE nucleotidase family.</text>
</comment>
<protein>
    <recommendedName>
        <fullName evidence="1">5'-nucleotidase SurE</fullName>
        <ecNumber evidence="1">3.1.3.5</ecNumber>
    </recommendedName>
    <alternativeName>
        <fullName evidence="1">Nucleoside 5'-monophosphate phosphohydrolase</fullName>
    </alternativeName>
</protein>